<keyword id="KW-0687">Ribonucleoprotein</keyword>
<keyword id="KW-0689">Ribosomal protein</keyword>
<keyword id="KW-0694">RNA-binding</keyword>
<keyword id="KW-0699">rRNA-binding</keyword>
<evidence type="ECO:0000255" key="1">
    <source>
        <dbReference type="HAMAP-Rule" id="MF_01306"/>
    </source>
</evidence>
<evidence type="ECO:0000256" key="2">
    <source>
        <dbReference type="SAM" id="MobiDB-lite"/>
    </source>
</evidence>
<evidence type="ECO:0000305" key="3"/>
<sequence>MANNTRARRTARLSRALGIALTPKAAKYMERRPYGPGEHGRARKKQDSDYAVRLREKQRLRAQYGIREAQMTRAFEEARRTKGLTGENLVELLEMRLDALVLRAGFARTIAQARQLVVHRHIMVDGIRVDRPSFRVGEGQLIHVHSRSEVMPPFQVAAAGAHVLNNVPAYLDVKIDALQARLVRRPKRSEVPVICEEQLVVEFYAR</sequence>
<reference key="1">
    <citation type="journal article" date="2006" name="PLoS Genet.">
        <title>Secrets of soil survival revealed by the genome sequence of Arthrobacter aurescens TC1.</title>
        <authorList>
            <person name="Mongodin E.F."/>
            <person name="Shapir N."/>
            <person name="Daugherty S.C."/>
            <person name="DeBoy R.T."/>
            <person name="Emerson J.B."/>
            <person name="Shvartzbeyn A."/>
            <person name="Radune D."/>
            <person name="Vamathevan J."/>
            <person name="Riggs F."/>
            <person name="Grinberg V."/>
            <person name="Khouri H.M."/>
            <person name="Wackett L.P."/>
            <person name="Nelson K.E."/>
            <person name="Sadowsky M.J."/>
        </authorList>
    </citation>
    <scope>NUCLEOTIDE SEQUENCE [LARGE SCALE GENOMIC DNA]</scope>
    <source>
        <strain>TC1</strain>
    </source>
</reference>
<protein>
    <recommendedName>
        <fullName evidence="1">Small ribosomal subunit protein uS4</fullName>
    </recommendedName>
    <alternativeName>
        <fullName evidence="3">30S ribosomal protein S4</fullName>
    </alternativeName>
</protein>
<name>RS4_PAEAT</name>
<dbReference type="EMBL" id="CP000474">
    <property type="protein sequence ID" value="ABM06400.1"/>
    <property type="molecule type" value="Genomic_DNA"/>
</dbReference>
<dbReference type="RefSeq" id="WP_011774968.1">
    <property type="nucleotide sequence ID" value="NC_008711.1"/>
</dbReference>
<dbReference type="SMR" id="A1R712"/>
<dbReference type="STRING" id="290340.AAur_2284"/>
<dbReference type="KEGG" id="aau:AAur_2284"/>
<dbReference type="eggNOG" id="COG0522">
    <property type="taxonomic scope" value="Bacteria"/>
</dbReference>
<dbReference type="HOGENOM" id="CLU_092403_0_3_11"/>
<dbReference type="OrthoDB" id="9803672at2"/>
<dbReference type="Proteomes" id="UP000000637">
    <property type="component" value="Chromosome"/>
</dbReference>
<dbReference type="GO" id="GO:0015935">
    <property type="term" value="C:small ribosomal subunit"/>
    <property type="evidence" value="ECO:0007669"/>
    <property type="project" value="InterPro"/>
</dbReference>
<dbReference type="GO" id="GO:0019843">
    <property type="term" value="F:rRNA binding"/>
    <property type="evidence" value="ECO:0007669"/>
    <property type="project" value="UniProtKB-UniRule"/>
</dbReference>
<dbReference type="GO" id="GO:0003735">
    <property type="term" value="F:structural constituent of ribosome"/>
    <property type="evidence" value="ECO:0007669"/>
    <property type="project" value="InterPro"/>
</dbReference>
<dbReference type="GO" id="GO:0042274">
    <property type="term" value="P:ribosomal small subunit biogenesis"/>
    <property type="evidence" value="ECO:0007669"/>
    <property type="project" value="TreeGrafter"/>
</dbReference>
<dbReference type="GO" id="GO:0006412">
    <property type="term" value="P:translation"/>
    <property type="evidence" value="ECO:0007669"/>
    <property type="project" value="UniProtKB-UniRule"/>
</dbReference>
<dbReference type="CDD" id="cd00165">
    <property type="entry name" value="S4"/>
    <property type="match status" value="1"/>
</dbReference>
<dbReference type="FunFam" id="3.10.290.10:FF:000001">
    <property type="entry name" value="30S ribosomal protein S4"/>
    <property type="match status" value="1"/>
</dbReference>
<dbReference type="Gene3D" id="1.10.1050.10">
    <property type="entry name" value="Ribosomal Protein S4 Delta 41, Chain A, domain 1"/>
    <property type="match status" value="1"/>
</dbReference>
<dbReference type="Gene3D" id="3.10.290.10">
    <property type="entry name" value="RNA-binding S4 domain"/>
    <property type="match status" value="1"/>
</dbReference>
<dbReference type="HAMAP" id="MF_01306_B">
    <property type="entry name" value="Ribosomal_uS4_B"/>
    <property type="match status" value="1"/>
</dbReference>
<dbReference type="InterPro" id="IPR022801">
    <property type="entry name" value="Ribosomal_uS4"/>
</dbReference>
<dbReference type="InterPro" id="IPR005709">
    <property type="entry name" value="Ribosomal_uS4_bac-type"/>
</dbReference>
<dbReference type="InterPro" id="IPR018079">
    <property type="entry name" value="Ribosomal_uS4_CS"/>
</dbReference>
<dbReference type="InterPro" id="IPR001912">
    <property type="entry name" value="Ribosomal_uS4_N"/>
</dbReference>
<dbReference type="InterPro" id="IPR002942">
    <property type="entry name" value="S4_RNA-bd"/>
</dbReference>
<dbReference type="InterPro" id="IPR036986">
    <property type="entry name" value="S4_RNA-bd_sf"/>
</dbReference>
<dbReference type="NCBIfam" id="NF003717">
    <property type="entry name" value="PRK05327.1"/>
    <property type="match status" value="1"/>
</dbReference>
<dbReference type="NCBIfam" id="TIGR01017">
    <property type="entry name" value="rpsD_bact"/>
    <property type="match status" value="1"/>
</dbReference>
<dbReference type="PANTHER" id="PTHR11831">
    <property type="entry name" value="30S 40S RIBOSOMAL PROTEIN"/>
    <property type="match status" value="1"/>
</dbReference>
<dbReference type="PANTHER" id="PTHR11831:SF4">
    <property type="entry name" value="SMALL RIBOSOMAL SUBUNIT PROTEIN US4M"/>
    <property type="match status" value="1"/>
</dbReference>
<dbReference type="Pfam" id="PF00163">
    <property type="entry name" value="Ribosomal_S4"/>
    <property type="match status" value="1"/>
</dbReference>
<dbReference type="Pfam" id="PF01479">
    <property type="entry name" value="S4"/>
    <property type="match status" value="1"/>
</dbReference>
<dbReference type="SMART" id="SM01390">
    <property type="entry name" value="Ribosomal_S4"/>
    <property type="match status" value="1"/>
</dbReference>
<dbReference type="SMART" id="SM00363">
    <property type="entry name" value="S4"/>
    <property type="match status" value="1"/>
</dbReference>
<dbReference type="SUPFAM" id="SSF55174">
    <property type="entry name" value="Alpha-L RNA-binding motif"/>
    <property type="match status" value="1"/>
</dbReference>
<dbReference type="PROSITE" id="PS00632">
    <property type="entry name" value="RIBOSOMAL_S4"/>
    <property type="match status" value="1"/>
</dbReference>
<dbReference type="PROSITE" id="PS50889">
    <property type="entry name" value="S4"/>
    <property type="match status" value="1"/>
</dbReference>
<gene>
    <name evidence="1" type="primary">rpsD</name>
    <name type="ordered locus">AAur_2284</name>
</gene>
<proteinExistence type="inferred from homology"/>
<feature type="chain" id="PRO_0000293237" description="Small ribosomal subunit protein uS4">
    <location>
        <begin position="1"/>
        <end position="206"/>
    </location>
</feature>
<feature type="domain" description="S4 RNA-binding" evidence="1">
    <location>
        <begin position="95"/>
        <end position="160"/>
    </location>
</feature>
<feature type="region of interest" description="Disordered" evidence="2">
    <location>
        <begin position="28"/>
        <end position="48"/>
    </location>
</feature>
<comment type="function">
    <text evidence="1">One of the primary rRNA binding proteins, it binds directly to 16S rRNA where it nucleates assembly of the body of the 30S subunit.</text>
</comment>
<comment type="function">
    <text evidence="1">With S5 and S12 plays an important role in translational accuracy.</text>
</comment>
<comment type="subunit">
    <text evidence="1">Part of the 30S ribosomal subunit. Contacts protein S5. The interaction surface between S4 and S5 is involved in control of translational fidelity.</text>
</comment>
<comment type="similarity">
    <text evidence="1">Belongs to the universal ribosomal protein uS4 family.</text>
</comment>
<accession>A1R712</accession>
<organism>
    <name type="scientific">Paenarthrobacter aurescens (strain TC1)</name>
    <dbReference type="NCBI Taxonomy" id="290340"/>
    <lineage>
        <taxon>Bacteria</taxon>
        <taxon>Bacillati</taxon>
        <taxon>Actinomycetota</taxon>
        <taxon>Actinomycetes</taxon>
        <taxon>Micrococcales</taxon>
        <taxon>Micrococcaceae</taxon>
        <taxon>Paenarthrobacter</taxon>
    </lineage>
</organism>